<feature type="chain" id="PRO_1000075733" description="Ribonuclease 3">
    <location>
        <begin position="1"/>
        <end position="223"/>
    </location>
</feature>
<feature type="domain" description="RNase III" evidence="1">
    <location>
        <begin position="4"/>
        <end position="127"/>
    </location>
</feature>
<feature type="domain" description="DRBM" evidence="1">
    <location>
        <begin position="154"/>
        <end position="223"/>
    </location>
</feature>
<feature type="active site" evidence="1">
    <location>
        <position position="44"/>
    </location>
</feature>
<feature type="active site" evidence="1">
    <location>
        <position position="116"/>
    </location>
</feature>
<feature type="binding site" evidence="1">
    <location>
        <position position="40"/>
    </location>
    <ligand>
        <name>Mg(2+)</name>
        <dbReference type="ChEBI" id="CHEBI:18420"/>
    </ligand>
</feature>
<feature type="binding site" evidence="1">
    <location>
        <position position="113"/>
    </location>
    <ligand>
        <name>Mg(2+)</name>
        <dbReference type="ChEBI" id="CHEBI:18420"/>
    </ligand>
</feature>
<feature type="binding site" evidence="1">
    <location>
        <position position="116"/>
    </location>
    <ligand>
        <name>Mg(2+)</name>
        <dbReference type="ChEBI" id="CHEBI:18420"/>
    </ligand>
</feature>
<keyword id="KW-0963">Cytoplasm</keyword>
<keyword id="KW-0255">Endonuclease</keyword>
<keyword id="KW-0378">Hydrolase</keyword>
<keyword id="KW-0460">Magnesium</keyword>
<keyword id="KW-0479">Metal-binding</keyword>
<keyword id="KW-0507">mRNA processing</keyword>
<keyword id="KW-0540">Nuclease</keyword>
<keyword id="KW-1185">Reference proteome</keyword>
<keyword id="KW-0694">RNA-binding</keyword>
<keyword id="KW-0698">rRNA processing</keyword>
<keyword id="KW-0699">rRNA-binding</keyword>
<keyword id="KW-0819">tRNA processing</keyword>
<protein>
    <recommendedName>
        <fullName evidence="1">Ribonuclease 3</fullName>
        <ecNumber evidence="1">3.1.26.3</ecNumber>
    </recommendedName>
    <alternativeName>
        <fullName evidence="1">Ribonuclease III</fullName>
        <shortName evidence="1">RNase III</shortName>
    </alternativeName>
</protein>
<reference key="1">
    <citation type="submission" date="2007-07" db="EMBL/GenBank/DDBJ databases">
        <title>Genome sequence of Campylobacter curvus 525.92 isolated from human feces.</title>
        <authorList>
            <person name="Fouts D.E."/>
            <person name="Mongodin E.F."/>
            <person name="Puiu D."/>
            <person name="Sebastian Y."/>
            <person name="Miller W.G."/>
            <person name="Mandrell R.E."/>
            <person name="Lastovica A.J."/>
            <person name="Nelson K.E."/>
        </authorList>
    </citation>
    <scope>NUCLEOTIDE SEQUENCE [LARGE SCALE GENOMIC DNA]</scope>
    <source>
        <strain>525.92</strain>
    </source>
</reference>
<proteinExistence type="inferred from homology"/>
<gene>
    <name evidence="1" type="primary">rnc</name>
    <name type="ordered locus">Ccur92_19240</name>
    <name type="ORF">CCV52592_2065</name>
</gene>
<dbReference type="EC" id="3.1.26.3" evidence="1"/>
<dbReference type="EMBL" id="CP000767">
    <property type="protein sequence ID" value="EAU00834.1"/>
    <property type="molecule type" value="Genomic_DNA"/>
</dbReference>
<dbReference type="RefSeq" id="WP_009649692.1">
    <property type="nucleotide sequence ID" value="NC_009715.2"/>
</dbReference>
<dbReference type="SMR" id="A7H186"/>
<dbReference type="STRING" id="360105.CCV52592_2065"/>
<dbReference type="KEGG" id="ccv:CCV52592_2065"/>
<dbReference type="HOGENOM" id="CLU_000907_1_3_7"/>
<dbReference type="OrthoDB" id="9805026at2"/>
<dbReference type="Proteomes" id="UP000006380">
    <property type="component" value="Chromosome"/>
</dbReference>
<dbReference type="GO" id="GO:0005737">
    <property type="term" value="C:cytoplasm"/>
    <property type="evidence" value="ECO:0007669"/>
    <property type="project" value="UniProtKB-SubCell"/>
</dbReference>
<dbReference type="GO" id="GO:0003725">
    <property type="term" value="F:double-stranded RNA binding"/>
    <property type="evidence" value="ECO:0007669"/>
    <property type="project" value="TreeGrafter"/>
</dbReference>
<dbReference type="GO" id="GO:0046872">
    <property type="term" value="F:metal ion binding"/>
    <property type="evidence" value="ECO:0007669"/>
    <property type="project" value="UniProtKB-KW"/>
</dbReference>
<dbReference type="GO" id="GO:0004525">
    <property type="term" value="F:ribonuclease III activity"/>
    <property type="evidence" value="ECO:0007669"/>
    <property type="project" value="UniProtKB-UniRule"/>
</dbReference>
<dbReference type="GO" id="GO:0019843">
    <property type="term" value="F:rRNA binding"/>
    <property type="evidence" value="ECO:0007669"/>
    <property type="project" value="UniProtKB-KW"/>
</dbReference>
<dbReference type="GO" id="GO:0006397">
    <property type="term" value="P:mRNA processing"/>
    <property type="evidence" value="ECO:0007669"/>
    <property type="project" value="UniProtKB-UniRule"/>
</dbReference>
<dbReference type="GO" id="GO:0010468">
    <property type="term" value="P:regulation of gene expression"/>
    <property type="evidence" value="ECO:0007669"/>
    <property type="project" value="TreeGrafter"/>
</dbReference>
<dbReference type="GO" id="GO:0006364">
    <property type="term" value="P:rRNA processing"/>
    <property type="evidence" value="ECO:0007669"/>
    <property type="project" value="UniProtKB-UniRule"/>
</dbReference>
<dbReference type="GO" id="GO:0008033">
    <property type="term" value="P:tRNA processing"/>
    <property type="evidence" value="ECO:0007669"/>
    <property type="project" value="UniProtKB-KW"/>
</dbReference>
<dbReference type="CDD" id="cd10845">
    <property type="entry name" value="DSRM_RNAse_III_family"/>
    <property type="match status" value="1"/>
</dbReference>
<dbReference type="CDD" id="cd00593">
    <property type="entry name" value="RIBOc"/>
    <property type="match status" value="1"/>
</dbReference>
<dbReference type="FunFam" id="1.10.1520.10:FF:000001">
    <property type="entry name" value="Ribonuclease 3"/>
    <property type="match status" value="1"/>
</dbReference>
<dbReference type="Gene3D" id="3.30.160.20">
    <property type="match status" value="1"/>
</dbReference>
<dbReference type="Gene3D" id="1.10.1520.10">
    <property type="entry name" value="Ribonuclease III domain"/>
    <property type="match status" value="1"/>
</dbReference>
<dbReference type="HAMAP" id="MF_00104">
    <property type="entry name" value="RNase_III"/>
    <property type="match status" value="1"/>
</dbReference>
<dbReference type="InterPro" id="IPR014720">
    <property type="entry name" value="dsRBD_dom"/>
</dbReference>
<dbReference type="InterPro" id="IPR011907">
    <property type="entry name" value="RNase_III"/>
</dbReference>
<dbReference type="InterPro" id="IPR000999">
    <property type="entry name" value="RNase_III_dom"/>
</dbReference>
<dbReference type="InterPro" id="IPR036389">
    <property type="entry name" value="RNase_III_sf"/>
</dbReference>
<dbReference type="NCBIfam" id="TIGR02191">
    <property type="entry name" value="RNaseIII"/>
    <property type="match status" value="1"/>
</dbReference>
<dbReference type="PANTHER" id="PTHR11207:SF0">
    <property type="entry name" value="RIBONUCLEASE 3"/>
    <property type="match status" value="1"/>
</dbReference>
<dbReference type="PANTHER" id="PTHR11207">
    <property type="entry name" value="RIBONUCLEASE III"/>
    <property type="match status" value="1"/>
</dbReference>
<dbReference type="Pfam" id="PF00035">
    <property type="entry name" value="dsrm"/>
    <property type="match status" value="1"/>
</dbReference>
<dbReference type="Pfam" id="PF14622">
    <property type="entry name" value="Ribonucleas_3_3"/>
    <property type="match status" value="1"/>
</dbReference>
<dbReference type="SMART" id="SM00358">
    <property type="entry name" value="DSRM"/>
    <property type="match status" value="1"/>
</dbReference>
<dbReference type="SMART" id="SM00535">
    <property type="entry name" value="RIBOc"/>
    <property type="match status" value="1"/>
</dbReference>
<dbReference type="SUPFAM" id="SSF54768">
    <property type="entry name" value="dsRNA-binding domain-like"/>
    <property type="match status" value="1"/>
</dbReference>
<dbReference type="SUPFAM" id="SSF69065">
    <property type="entry name" value="RNase III domain-like"/>
    <property type="match status" value="1"/>
</dbReference>
<dbReference type="PROSITE" id="PS50137">
    <property type="entry name" value="DS_RBD"/>
    <property type="match status" value="1"/>
</dbReference>
<dbReference type="PROSITE" id="PS00517">
    <property type="entry name" value="RNASE_3_1"/>
    <property type="match status" value="1"/>
</dbReference>
<dbReference type="PROSITE" id="PS50142">
    <property type="entry name" value="RNASE_3_2"/>
    <property type="match status" value="1"/>
</dbReference>
<organism>
    <name type="scientific">Campylobacter curvus (strain 525.92)</name>
    <dbReference type="NCBI Taxonomy" id="360105"/>
    <lineage>
        <taxon>Bacteria</taxon>
        <taxon>Pseudomonadati</taxon>
        <taxon>Campylobacterota</taxon>
        <taxon>Epsilonproteobacteria</taxon>
        <taxon>Campylobacterales</taxon>
        <taxon>Campylobacteraceae</taxon>
        <taxon>Campylobacter</taxon>
    </lineage>
</organism>
<accession>A7H186</accession>
<evidence type="ECO:0000255" key="1">
    <source>
        <dbReference type="HAMAP-Rule" id="MF_00104"/>
    </source>
</evidence>
<sequence>MKDLENLQKLLGYEFENTKLLNEALTHKSTKLPYSNERLEFLGDAVMDLIVGEYLFKKFSKTNEGDMSKLRAALVNEKSFANMARHLQIGEFIHLSTAEANNGGREKASLLSDAFEAVMGAVYLEAGLDKVREIAVRLLEICYPKIDFSHLVKDYKTALQEITQASLGTTPIYELVRSFGPDHKKEFEIALLLNDKEISRAIANSKKEAQQMAAKIALEKMKK</sequence>
<comment type="function">
    <text evidence="1">Digests double-stranded RNA. Involved in the processing of primary rRNA transcript to yield the immediate precursors to the large and small rRNAs (23S and 16S). Processes some mRNAs, and tRNAs when they are encoded in the rRNA operon. Processes pre-crRNA and tracrRNA of type II CRISPR loci if present in the organism.</text>
</comment>
<comment type="catalytic activity">
    <reaction evidence="1">
        <text>Endonucleolytic cleavage to 5'-phosphomonoester.</text>
        <dbReference type="EC" id="3.1.26.3"/>
    </reaction>
</comment>
<comment type="cofactor">
    <cofactor evidence="1">
        <name>Mg(2+)</name>
        <dbReference type="ChEBI" id="CHEBI:18420"/>
    </cofactor>
</comment>
<comment type="subunit">
    <text evidence="1">Homodimer.</text>
</comment>
<comment type="subcellular location">
    <subcellularLocation>
        <location evidence="1">Cytoplasm</location>
    </subcellularLocation>
</comment>
<comment type="similarity">
    <text evidence="1">Belongs to the ribonuclease III family.</text>
</comment>
<name>RNC_CAMC5</name>